<name>XGPT_SHIBS</name>
<keyword id="KW-0997">Cell inner membrane</keyword>
<keyword id="KW-1003">Cell membrane</keyword>
<keyword id="KW-0328">Glycosyltransferase</keyword>
<keyword id="KW-0460">Magnesium</keyword>
<keyword id="KW-0472">Membrane</keyword>
<keyword id="KW-0479">Metal-binding</keyword>
<keyword id="KW-0660">Purine salvage</keyword>
<keyword id="KW-0808">Transferase</keyword>
<accession>Q325P8</accession>
<organism>
    <name type="scientific">Shigella boydii serotype 4 (strain Sb227)</name>
    <dbReference type="NCBI Taxonomy" id="300268"/>
    <lineage>
        <taxon>Bacteria</taxon>
        <taxon>Pseudomonadati</taxon>
        <taxon>Pseudomonadota</taxon>
        <taxon>Gammaproteobacteria</taxon>
        <taxon>Enterobacterales</taxon>
        <taxon>Enterobacteriaceae</taxon>
        <taxon>Shigella</taxon>
    </lineage>
</organism>
<reference key="1">
    <citation type="journal article" date="2005" name="Nucleic Acids Res.">
        <title>Genome dynamics and diversity of Shigella species, the etiologic agents of bacillary dysentery.</title>
        <authorList>
            <person name="Yang F."/>
            <person name="Yang J."/>
            <person name="Zhang X."/>
            <person name="Chen L."/>
            <person name="Jiang Y."/>
            <person name="Yan Y."/>
            <person name="Tang X."/>
            <person name="Wang J."/>
            <person name="Xiong Z."/>
            <person name="Dong J."/>
            <person name="Xue Y."/>
            <person name="Zhu Y."/>
            <person name="Xu X."/>
            <person name="Sun L."/>
            <person name="Chen S."/>
            <person name="Nie H."/>
            <person name="Peng J."/>
            <person name="Xu J."/>
            <person name="Wang Y."/>
            <person name="Yuan Z."/>
            <person name="Wen Y."/>
            <person name="Yao Z."/>
            <person name="Shen Y."/>
            <person name="Qiang B."/>
            <person name="Hou Y."/>
            <person name="Yu J."/>
            <person name="Jin Q."/>
        </authorList>
    </citation>
    <scope>NUCLEOTIDE SEQUENCE [LARGE SCALE GENOMIC DNA]</scope>
    <source>
        <strain>Sb227</strain>
    </source>
</reference>
<comment type="function">
    <text evidence="1">Purine salvage pathway enzyme that catalyzes the transfer of the ribosyl-5-phosphate group from 5-phospho-alpha-D-ribose 1-diphosphate (PRPP) to the N9 position of the 6-oxopurines guanine and xanthine to form the corresponding ribonucleotides GMP (guanosine 5'-monophosphate) and XMP (xanthosine 5'-monophosphate), with the release of PPi. To a lesser extent, also acts on hypoxanthine.</text>
</comment>
<comment type="catalytic activity">
    <reaction evidence="1">
        <text>GMP + diphosphate = guanine + 5-phospho-alpha-D-ribose 1-diphosphate</text>
        <dbReference type="Rhea" id="RHEA:25424"/>
        <dbReference type="ChEBI" id="CHEBI:16235"/>
        <dbReference type="ChEBI" id="CHEBI:33019"/>
        <dbReference type="ChEBI" id="CHEBI:58017"/>
        <dbReference type="ChEBI" id="CHEBI:58115"/>
    </reaction>
    <physiologicalReaction direction="right-to-left" evidence="1">
        <dbReference type="Rhea" id="RHEA:25426"/>
    </physiologicalReaction>
</comment>
<comment type="catalytic activity">
    <reaction evidence="1">
        <text>XMP + diphosphate = xanthine + 5-phospho-alpha-D-ribose 1-diphosphate</text>
        <dbReference type="Rhea" id="RHEA:10800"/>
        <dbReference type="ChEBI" id="CHEBI:17712"/>
        <dbReference type="ChEBI" id="CHEBI:33019"/>
        <dbReference type="ChEBI" id="CHEBI:57464"/>
        <dbReference type="ChEBI" id="CHEBI:58017"/>
        <dbReference type="EC" id="2.4.2.22"/>
    </reaction>
    <physiologicalReaction direction="right-to-left" evidence="1">
        <dbReference type="Rhea" id="RHEA:10802"/>
    </physiologicalReaction>
</comment>
<comment type="catalytic activity">
    <reaction evidence="1">
        <text>IMP + diphosphate = hypoxanthine + 5-phospho-alpha-D-ribose 1-diphosphate</text>
        <dbReference type="Rhea" id="RHEA:17973"/>
        <dbReference type="ChEBI" id="CHEBI:17368"/>
        <dbReference type="ChEBI" id="CHEBI:33019"/>
        <dbReference type="ChEBI" id="CHEBI:58017"/>
        <dbReference type="ChEBI" id="CHEBI:58053"/>
    </reaction>
    <physiologicalReaction direction="right-to-left" evidence="1">
        <dbReference type="Rhea" id="RHEA:17975"/>
    </physiologicalReaction>
</comment>
<comment type="cofactor">
    <cofactor evidence="1">
        <name>Mg(2+)</name>
        <dbReference type="ChEBI" id="CHEBI:18420"/>
    </cofactor>
</comment>
<comment type="pathway">
    <text evidence="1">Purine metabolism; GMP biosynthesis via salvage pathway; GMP from guanine: step 1/1.</text>
</comment>
<comment type="pathway">
    <text evidence="1">Purine metabolism; XMP biosynthesis via salvage pathway; XMP from xanthine: step 1/1.</text>
</comment>
<comment type="subunit">
    <text evidence="1">Homotetramer.</text>
</comment>
<comment type="subcellular location">
    <subcellularLocation>
        <location evidence="1">Cell inner membrane</location>
        <topology evidence="1">Peripheral membrane protein</topology>
    </subcellularLocation>
</comment>
<comment type="similarity">
    <text evidence="1">Belongs to the purine/pyrimidine phosphoribosyltransferase family. XGPT subfamily.</text>
</comment>
<feature type="chain" id="PRO_0000261019" description="Xanthine-guanine phosphoribosyltransferase">
    <location>
        <begin position="1"/>
        <end position="152"/>
    </location>
</feature>
<feature type="binding site" evidence="1">
    <location>
        <begin position="37"/>
        <end position="38"/>
    </location>
    <ligand>
        <name>5-phospho-alpha-D-ribose 1-diphosphate</name>
        <dbReference type="ChEBI" id="CHEBI:58017"/>
    </ligand>
</feature>
<feature type="binding site" evidence="1">
    <location>
        <position position="69"/>
    </location>
    <ligand>
        <name>5-phospho-alpha-D-ribose 1-diphosphate</name>
        <dbReference type="ChEBI" id="CHEBI:58017"/>
    </ligand>
</feature>
<feature type="binding site" evidence="1">
    <location>
        <position position="69"/>
    </location>
    <ligand>
        <name>GMP</name>
        <dbReference type="ChEBI" id="CHEBI:58115"/>
    </ligand>
</feature>
<feature type="binding site" evidence="1">
    <location>
        <begin position="88"/>
        <end position="96"/>
    </location>
    <ligand>
        <name>5-phospho-alpha-D-ribose 1-diphosphate</name>
        <dbReference type="ChEBI" id="CHEBI:58017"/>
    </ligand>
</feature>
<feature type="binding site" evidence="1">
    <location>
        <position position="89"/>
    </location>
    <ligand>
        <name>Mg(2+)</name>
        <dbReference type="ChEBI" id="CHEBI:18420"/>
    </ligand>
</feature>
<feature type="binding site" evidence="1">
    <location>
        <begin position="92"/>
        <end position="96"/>
    </location>
    <ligand>
        <name>GMP</name>
        <dbReference type="ChEBI" id="CHEBI:58115"/>
    </ligand>
</feature>
<feature type="binding site" evidence="1">
    <location>
        <position position="92"/>
    </location>
    <ligand>
        <name>guanine</name>
        <dbReference type="ChEBI" id="CHEBI:16235"/>
    </ligand>
</feature>
<feature type="binding site" evidence="1">
    <location>
        <position position="92"/>
    </location>
    <ligand>
        <name>xanthine</name>
        <dbReference type="ChEBI" id="CHEBI:17712"/>
    </ligand>
</feature>
<feature type="binding site" evidence="1">
    <location>
        <begin position="134"/>
        <end position="135"/>
    </location>
    <ligand>
        <name>GMP</name>
        <dbReference type="ChEBI" id="CHEBI:58115"/>
    </ligand>
</feature>
<feature type="binding site" evidence="1">
    <location>
        <position position="135"/>
    </location>
    <ligand>
        <name>guanine</name>
        <dbReference type="ChEBI" id="CHEBI:16235"/>
    </ligand>
</feature>
<feature type="binding site" evidence="1">
    <location>
        <position position="135"/>
    </location>
    <ligand>
        <name>xanthine</name>
        <dbReference type="ChEBI" id="CHEBI:17712"/>
    </ligand>
</feature>
<dbReference type="EC" id="2.4.2.-" evidence="1"/>
<dbReference type="EC" id="2.4.2.22" evidence="1"/>
<dbReference type="EMBL" id="CP000036">
    <property type="protein sequence ID" value="ABB64960.1"/>
    <property type="molecule type" value="Genomic_DNA"/>
</dbReference>
<dbReference type="RefSeq" id="WP_001291990.1">
    <property type="nucleotide sequence ID" value="NC_007613.1"/>
</dbReference>
<dbReference type="SMR" id="Q325P8"/>
<dbReference type="GeneID" id="93777155"/>
<dbReference type="KEGG" id="sbo:SBO_0244"/>
<dbReference type="HOGENOM" id="CLU_080904_3_0_6"/>
<dbReference type="UniPathway" id="UPA00602">
    <property type="reaction ID" value="UER00658"/>
</dbReference>
<dbReference type="UniPathway" id="UPA00909">
    <property type="reaction ID" value="UER00887"/>
</dbReference>
<dbReference type="Proteomes" id="UP000007067">
    <property type="component" value="Chromosome"/>
</dbReference>
<dbReference type="GO" id="GO:0005829">
    <property type="term" value="C:cytosol"/>
    <property type="evidence" value="ECO:0007669"/>
    <property type="project" value="TreeGrafter"/>
</dbReference>
<dbReference type="GO" id="GO:0005886">
    <property type="term" value="C:plasma membrane"/>
    <property type="evidence" value="ECO:0007669"/>
    <property type="project" value="UniProtKB-SubCell"/>
</dbReference>
<dbReference type="GO" id="GO:0052657">
    <property type="term" value="F:guanine phosphoribosyltransferase activity"/>
    <property type="evidence" value="ECO:0007669"/>
    <property type="project" value="RHEA"/>
</dbReference>
<dbReference type="GO" id="GO:0004422">
    <property type="term" value="F:hypoxanthine phosphoribosyltransferase activity"/>
    <property type="evidence" value="ECO:0007669"/>
    <property type="project" value="TreeGrafter"/>
</dbReference>
<dbReference type="GO" id="GO:0000287">
    <property type="term" value="F:magnesium ion binding"/>
    <property type="evidence" value="ECO:0007669"/>
    <property type="project" value="UniProtKB-UniRule"/>
</dbReference>
<dbReference type="GO" id="GO:0000310">
    <property type="term" value="F:xanthine phosphoribosyltransferase activity"/>
    <property type="evidence" value="ECO:0007669"/>
    <property type="project" value="UniProtKB-UniRule"/>
</dbReference>
<dbReference type="GO" id="GO:0032263">
    <property type="term" value="P:GMP salvage"/>
    <property type="evidence" value="ECO:0007669"/>
    <property type="project" value="UniProtKB-UniRule"/>
</dbReference>
<dbReference type="GO" id="GO:0032264">
    <property type="term" value="P:IMP salvage"/>
    <property type="evidence" value="ECO:0007669"/>
    <property type="project" value="TreeGrafter"/>
</dbReference>
<dbReference type="GO" id="GO:0006166">
    <property type="term" value="P:purine ribonucleoside salvage"/>
    <property type="evidence" value="ECO:0007669"/>
    <property type="project" value="UniProtKB-KW"/>
</dbReference>
<dbReference type="GO" id="GO:0032265">
    <property type="term" value="P:XMP salvage"/>
    <property type="evidence" value="ECO:0007669"/>
    <property type="project" value="UniProtKB-UniRule"/>
</dbReference>
<dbReference type="CDD" id="cd06223">
    <property type="entry name" value="PRTases_typeI"/>
    <property type="match status" value="1"/>
</dbReference>
<dbReference type="FunFam" id="3.40.50.2020:FF:000009">
    <property type="entry name" value="Xanthine phosphoribosyltransferase"/>
    <property type="match status" value="1"/>
</dbReference>
<dbReference type="Gene3D" id="3.40.50.2020">
    <property type="match status" value="1"/>
</dbReference>
<dbReference type="HAMAP" id="MF_01903">
    <property type="entry name" value="XGPRT"/>
    <property type="match status" value="1"/>
</dbReference>
<dbReference type="InterPro" id="IPR000836">
    <property type="entry name" value="PRibTrfase_dom"/>
</dbReference>
<dbReference type="InterPro" id="IPR029057">
    <property type="entry name" value="PRTase-like"/>
</dbReference>
<dbReference type="InterPro" id="IPR023747">
    <property type="entry name" value="Xanthine_Guanine_PRibTrfase"/>
</dbReference>
<dbReference type="NCBIfam" id="NF006613">
    <property type="entry name" value="PRK09177.1"/>
    <property type="match status" value="1"/>
</dbReference>
<dbReference type="PANTHER" id="PTHR39563">
    <property type="entry name" value="XANTHINE PHOSPHORIBOSYLTRANSFERASE"/>
    <property type="match status" value="1"/>
</dbReference>
<dbReference type="PANTHER" id="PTHR39563:SF1">
    <property type="entry name" value="XANTHINE-GUANINE PHOSPHORIBOSYLTRANSFERASE"/>
    <property type="match status" value="1"/>
</dbReference>
<dbReference type="Pfam" id="PF00156">
    <property type="entry name" value="Pribosyltran"/>
    <property type="match status" value="1"/>
</dbReference>
<dbReference type="SUPFAM" id="SSF53271">
    <property type="entry name" value="PRTase-like"/>
    <property type="match status" value="1"/>
</dbReference>
<dbReference type="PROSITE" id="PS00103">
    <property type="entry name" value="PUR_PYR_PR_TRANSFER"/>
    <property type="match status" value="1"/>
</dbReference>
<gene>
    <name evidence="1" type="primary">gpt</name>
    <name type="ordered locus">SBO_0244</name>
</gene>
<proteinExistence type="inferred from homology"/>
<sequence>MSEKYIVTWDMLQIHARKLASRLMPSEQWKGIIAVSRGGLVPGALLARELGIRHVDTVCISSYDHDNQRELKVLKRAEGDGEGFIVIDDLVDTGGTAVAIREMYPKAHFVTIFAKPAGRPLVDDYVVDIPQDTWIEQPWDMGVVFVPPISGR</sequence>
<protein>
    <recommendedName>
        <fullName evidence="1">Xanthine-guanine phosphoribosyltransferase</fullName>
        <shortName evidence="1">XGPRT</shortName>
        <ecNumber evidence="1">2.4.2.-</ecNumber>
        <ecNumber evidence="1">2.4.2.22</ecNumber>
    </recommendedName>
    <alternativeName>
        <fullName evidence="1">Xanthine phosphoribosyltransferase</fullName>
    </alternativeName>
</protein>
<evidence type="ECO:0000255" key="1">
    <source>
        <dbReference type="HAMAP-Rule" id="MF_01903"/>
    </source>
</evidence>